<protein>
    <recommendedName>
        <fullName evidence="1">Small ribosomal subunit protein uS19</fullName>
    </recommendedName>
    <alternativeName>
        <fullName>40S ribosomal protein S15</fullName>
    </alternativeName>
</protein>
<accession>P51429</accession>
<organism>
    <name type="scientific">Naegleria gruberi</name>
    <name type="common">Amoeba</name>
    <dbReference type="NCBI Taxonomy" id="5762"/>
    <lineage>
        <taxon>Eukaryota</taxon>
        <taxon>Discoba</taxon>
        <taxon>Heterolobosea</taxon>
        <taxon>Tetramitia</taxon>
        <taxon>Eutetramitia</taxon>
        <taxon>Vahlkampfiidae</taxon>
        <taxon>Naegleria</taxon>
    </lineage>
</organism>
<proteinExistence type="evidence at transcript level"/>
<keyword id="KW-0687">Ribonucleoprotein</keyword>
<keyword id="KW-0689">Ribosomal protein</keyword>
<sequence length="120" mass="13319">MAMENDELKNLFTSALRRIIGKGISKKYKTLIEKAQKKRDTAPYGEKPDAVKTHLRDMIILPSMIGCVIGVYQGKDYVSVEIKPEMVGMKLSDFSLTYRPVKHGKPSIGATSSSGFVPLK</sequence>
<evidence type="ECO:0000305" key="1"/>
<dbReference type="EMBL" id="L39935">
    <property type="protein sequence ID" value="AAA62841.1"/>
    <property type="molecule type" value="mRNA"/>
</dbReference>
<dbReference type="SMR" id="P51429"/>
<dbReference type="VEuPathDB" id="AmoebaDB:NAEGRDRAFT_34072"/>
<dbReference type="eggNOG" id="KOG0898">
    <property type="taxonomic scope" value="Eukaryota"/>
</dbReference>
<dbReference type="GO" id="GO:0022627">
    <property type="term" value="C:cytosolic small ribosomal subunit"/>
    <property type="evidence" value="ECO:0007669"/>
    <property type="project" value="TreeGrafter"/>
</dbReference>
<dbReference type="GO" id="GO:0003723">
    <property type="term" value="F:RNA binding"/>
    <property type="evidence" value="ECO:0007669"/>
    <property type="project" value="InterPro"/>
</dbReference>
<dbReference type="GO" id="GO:0003735">
    <property type="term" value="F:structural constituent of ribosome"/>
    <property type="evidence" value="ECO:0007669"/>
    <property type="project" value="InterPro"/>
</dbReference>
<dbReference type="GO" id="GO:0000028">
    <property type="term" value="P:ribosomal small subunit assembly"/>
    <property type="evidence" value="ECO:0007669"/>
    <property type="project" value="TreeGrafter"/>
</dbReference>
<dbReference type="GO" id="GO:0006412">
    <property type="term" value="P:translation"/>
    <property type="evidence" value="ECO:0007669"/>
    <property type="project" value="InterPro"/>
</dbReference>
<dbReference type="FunFam" id="3.30.860.10:FF:000002">
    <property type="entry name" value="40S ribosomal protein S15"/>
    <property type="match status" value="1"/>
</dbReference>
<dbReference type="Gene3D" id="3.30.860.10">
    <property type="entry name" value="30s Ribosomal Protein S19, Chain A"/>
    <property type="match status" value="1"/>
</dbReference>
<dbReference type="HAMAP" id="MF_00531">
    <property type="entry name" value="Ribosomal_uS19"/>
    <property type="match status" value="1"/>
</dbReference>
<dbReference type="InterPro" id="IPR002222">
    <property type="entry name" value="Ribosomal_uS19"/>
</dbReference>
<dbReference type="InterPro" id="IPR020934">
    <property type="entry name" value="Ribosomal_uS19_CS"/>
</dbReference>
<dbReference type="InterPro" id="IPR005713">
    <property type="entry name" value="Ribosomal_uS19_euk/arc"/>
</dbReference>
<dbReference type="InterPro" id="IPR023575">
    <property type="entry name" value="Ribosomal_uS19_SF"/>
</dbReference>
<dbReference type="NCBIfam" id="TIGR01025">
    <property type="entry name" value="uS19_arch"/>
    <property type="match status" value="1"/>
</dbReference>
<dbReference type="PANTHER" id="PTHR11880">
    <property type="entry name" value="RIBOSOMAL PROTEIN S19P FAMILY MEMBER"/>
    <property type="match status" value="1"/>
</dbReference>
<dbReference type="PANTHER" id="PTHR11880:SF53">
    <property type="entry name" value="SMALL RIBOSOMAL SUBUNIT PROTEIN US19U-RELATED"/>
    <property type="match status" value="1"/>
</dbReference>
<dbReference type="Pfam" id="PF00203">
    <property type="entry name" value="Ribosomal_S19"/>
    <property type="match status" value="1"/>
</dbReference>
<dbReference type="PIRSF" id="PIRSF002144">
    <property type="entry name" value="Ribosomal_S19"/>
    <property type="match status" value="1"/>
</dbReference>
<dbReference type="PRINTS" id="PR00975">
    <property type="entry name" value="RIBOSOMALS19"/>
</dbReference>
<dbReference type="SUPFAM" id="SSF54570">
    <property type="entry name" value="Ribosomal protein S19"/>
    <property type="match status" value="1"/>
</dbReference>
<dbReference type="PROSITE" id="PS00323">
    <property type="entry name" value="RIBOSOMAL_S19"/>
    <property type="match status" value="1"/>
</dbReference>
<reference key="1">
    <citation type="submission" date="1995-03" db="EMBL/GenBank/DDBJ databases">
        <authorList>
            <person name="Clark C.G."/>
        </authorList>
    </citation>
    <scope>NUCLEOTIDE SEQUENCE [MRNA]</scope>
    <source>
        <strain>ATCC 30224 / NEG-M</strain>
    </source>
</reference>
<gene>
    <name type="primary">RPS15</name>
</gene>
<name>RS15_NAEGR</name>
<feature type="chain" id="PRO_0000130038" description="Small ribosomal subunit protein uS19">
    <location>
        <begin position="1" status="less than"/>
        <end position="120"/>
    </location>
</feature>
<feature type="non-terminal residue">
    <location>
        <position position="1"/>
    </location>
</feature>
<comment type="similarity">
    <text evidence="1">Belongs to the universal ribosomal protein uS19 family.</text>
</comment>